<gene>
    <name evidence="1" type="primary">rplP</name>
    <name type="ordered locus">SPy_0057</name>
    <name type="ordered locus">M5005_Spy0051</name>
</gene>
<keyword id="KW-1185">Reference proteome</keyword>
<keyword id="KW-0687">Ribonucleoprotein</keyword>
<keyword id="KW-0689">Ribosomal protein</keyword>
<keyword id="KW-0694">RNA-binding</keyword>
<keyword id="KW-0699">rRNA-binding</keyword>
<keyword id="KW-0820">tRNA-binding</keyword>
<accession>Q9A1W7</accession>
<accession>Q491P8</accession>
<protein>
    <recommendedName>
        <fullName evidence="1">Large ribosomal subunit protein uL16</fullName>
    </recommendedName>
    <alternativeName>
        <fullName evidence="2">50S ribosomal protein L16</fullName>
    </alternativeName>
</protein>
<name>RL16_STRP1</name>
<dbReference type="EMBL" id="AE004092">
    <property type="protein sequence ID" value="AAK33189.1"/>
    <property type="molecule type" value="Genomic_DNA"/>
</dbReference>
<dbReference type="EMBL" id="CP000017">
    <property type="protein sequence ID" value="AAZ50670.1"/>
    <property type="molecule type" value="Genomic_DNA"/>
</dbReference>
<dbReference type="RefSeq" id="NP_268467.1">
    <property type="nucleotide sequence ID" value="NC_002737.2"/>
</dbReference>
<dbReference type="SMR" id="Q9A1W7"/>
<dbReference type="PaxDb" id="1314-HKU360_00084"/>
<dbReference type="KEGG" id="spy:SPy_0057"/>
<dbReference type="KEGG" id="spz:M5005_Spy0051"/>
<dbReference type="PATRIC" id="fig|160490.10.peg.51"/>
<dbReference type="HOGENOM" id="CLU_078858_2_1_9"/>
<dbReference type="OMA" id="KGAVEYW"/>
<dbReference type="PRO" id="PR:Q9A1W7"/>
<dbReference type="Proteomes" id="UP000000750">
    <property type="component" value="Chromosome"/>
</dbReference>
<dbReference type="GO" id="GO:0022625">
    <property type="term" value="C:cytosolic large ribosomal subunit"/>
    <property type="evidence" value="ECO:0007669"/>
    <property type="project" value="TreeGrafter"/>
</dbReference>
<dbReference type="GO" id="GO:0019843">
    <property type="term" value="F:rRNA binding"/>
    <property type="evidence" value="ECO:0007669"/>
    <property type="project" value="UniProtKB-UniRule"/>
</dbReference>
<dbReference type="GO" id="GO:0003735">
    <property type="term" value="F:structural constituent of ribosome"/>
    <property type="evidence" value="ECO:0007669"/>
    <property type="project" value="InterPro"/>
</dbReference>
<dbReference type="GO" id="GO:0000049">
    <property type="term" value="F:tRNA binding"/>
    <property type="evidence" value="ECO:0007669"/>
    <property type="project" value="UniProtKB-KW"/>
</dbReference>
<dbReference type="GO" id="GO:0006412">
    <property type="term" value="P:translation"/>
    <property type="evidence" value="ECO:0007669"/>
    <property type="project" value="UniProtKB-UniRule"/>
</dbReference>
<dbReference type="CDD" id="cd01433">
    <property type="entry name" value="Ribosomal_L16_L10e"/>
    <property type="match status" value="1"/>
</dbReference>
<dbReference type="FunFam" id="3.90.1170.10:FF:000001">
    <property type="entry name" value="50S ribosomal protein L16"/>
    <property type="match status" value="1"/>
</dbReference>
<dbReference type="Gene3D" id="3.90.1170.10">
    <property type="entry name" value="Ribosomal protein L10e/L16"/>
    <property type="match status" value="1"/>
</dbReference>
<dbReference type="HAMAP" id="MF_01342">
    <property type="entry name" value="Ribosomal_uL16"/>
    <property type="match status" value="1"/>
</dbReference>
<dbReference type="InterPro" id="IPR047873">
    <property type="entry name" value="Ribosomal_uL16"/>
</dbReference>
<dbReference type="InterPro" id="IPR000114">
    <property type="entry name" value="Ribosomal_uL16_bact-type"/>
</dbReference>
<dbReference type="InterPro" id="IPR020798">
    <property type="entry name" value="Ribosomal_uL16_CS"/>
</dbReference>
<dbReference type="InterPro" id="IPR016180">
    <property type="entry name" value="Ribosomal_uL16_dom"/>
</dbReference>
<dbReference type="InterPro" id="IPR036920">
    <property type="entry name" value="Ribosomal_uL16_sf"/>
</dbReference>
<dbReference type="NCBIfam" id="TIGR01164">
    <property type="entry name" value="rplP_bact"/>
    <property type="match status" value="1"/>
</dbReference>
<dbReference type="PANTHER" id="PTHR12220">
    <property type="entry name" value="50S/60S RIBOSOMAL PROTEIN L16"/>
    <property type="match status" value="1"/>
</dbReference>
<dbReference type="PANTHER" id="PTHR12220:SF13">
    <property type="entry name" value="LARGE RIBOSOMAL SUBUNIT PROTEIN UL16M"/>
    <property type="match status" value="1"/>
</dbReference>
<dbReference type="Pfam" id="PF00252">
    <property type="entry name" value="Ribosomal_L16"/>
    <property type="match status" value="1"/>
</dbReference>
<dbReference type="PRINTS" id="PR00060">
    <property type="entry name" value="RIBOSOMALL16"/>
</dbReference>
<dbReference type="SUPFAM" id="SSF54686">
    <property type="entry name" value="Ribosomal protein L16p/L10e"/>
    <property type="match status" value="1"/>
</dbReference>
<dbReference type="PROSITE" id="PS00586">
    <property type="entry name" value="RIBOSOMAL_L16_1"/>
    <property type="match status" value="1"/>
</dbReference>
<dbReference type="PROSITE" id="PS00701">
    <property type="entry name" value="RIBOSOMAL_L16_2"/>
    <property type="match status" value="1"/>
</dbReference>
<evidence type="ECO:0000255" key="1">
    <source>
        <dbReference type="HAMAP-Rule" id="MF_01342"/>
    </source>
</evidence>
<evidence type="ECO:0000305" key="2"/>
<feature type="chain" id="PRO_0000062219" description="Large ribosomal subunit protein uL16">
    <location>
        <begin position="1"/>
        <end position="137"/>
    </location>
</feature>
<organism>
    <name type="scientific">Streptococcus pyogenes serotype M1</name>
    <dbReference type="NCBI Taxonomy" id="301447"/>
    <lineage>
        <taxon>Bacteria</taxon>
        <taxon>Bacillati</taxon>
        <taxon>Bacillota</taxon>
        <taxon>Bacilli</taxon>
        <taxon>Lactobacillales</taxon>
        <taxon>Streptococcaceae</taxon>
        <taxon>Streptococcus</taxon>
    </lineage>
</organism>
<sequence length="137" mass="15452">MLVPKRVKHRREFRGKMRGEAKGGKEVSFGEYGLQATTSHWITNRQIEAARIAMTRYMKRGGKVWIKIFPHKSYTAKAIGVRMGSGKGAPEGWVAPVKRGKVMFEIAGVSEEIAREALRLASHKLPVKCKFVKREAE</sequence>
<comment type="function">
    <text evidence="1">Binds 23S rRNA and is also seen to make contacts with the A and possibly P site tRNAs.</text>
</comment>
<comment type="subunit">
    <text evidence="1">Part of the 50S ribosomal subunit.</text>
</comment>
<comment type="similarity">
    <text evidence="1">Belongs to the universal ribosomal protein uL16 family.</text>
</comment>
<proteinExistence type="inferred from homology"/>
<reference key="1">
    <citation type="journal article" date="2001" name="Proc. Natl. Acad. Sci. U.S.A.">
        <title>Complete genome sequence of an M1 strain of Streptococcus pyogenes.</title>
        <authorList>
            <person name="Ferretti J.J."/>
            <person name="McShan W.M."/>
            <person name="Ajdic D.J."/>
            <person name="Savic D.J."/>
            <person name="Savic G."/>
            <person name="Lyon K."/>
            <person name="Primeaux C."/>
            <person name="Sezate S."/>
            <person name="Suvorov A.N."/>
            <person name="Kenton S."/>
            <person name="Lai H.S."/>
            <person name="Lin S.P."/>
            <person name="Qian Y."/>
            <person name="Jia H.G."/>
            <person name="Najar F.Z."/>
            <person name="Ren Q."/>
            <person name="Zhu H."/>
            <person name="Song L."/>
            <person name="White J."/>
            <person name="Yuan X."/>
            <person name="Clifton S.W."/>
            <person name="Roe B.A."/>
            <person name="McLaughlin R.E."/>
        </authorList>
    </citation>
    <scope>NUCLEOTIDE SEQUENCE [LARGE SCALE GENOMIC DNA]</scope>
    <source>
        <strain>ATCC 700294 / SF370 / Serotype M1</strain>
    </source>
</reference>
<reference key="2">
    <citation type="journal article" date="2005" name="J. Infect. Dis.">
        <title>Evolutionary origin and emergence of a highly successful clone of serotype M1 group A Streptococcus involved multiple horizontal gene transfer events.</title>
        <authorList>
            <person name="Sumby P."/>
            <person name="Porcella S.F."/>
            <person name="Madrigal A.G."/>
            <person name="Barbian K.D."/>
            <person name="Virtaneva K."/>
            <person name="Ricklefs S.M."/>
            <person name="Sturdevant D.E."/>
            <person name="Graham M.R."/>
            <person name="Vuopio-Varkila J."/>
            <person name="Hoe N.P."/>
            <person name="Musser J.M."/>
        </authorList>
    </citation>
    <scope>NUCLEOTIDE SEQUENCE [LARGE SCALE GENOMIC DNA]</scope>
    <source>
        <strain>ATCC BAA-947 / MGAS5005 / Serotype M1</strain>
    </source>
</reference>